<gene>
    <name evidence="1" type="primary">rpmF</name>
    <name type="ordered locus">SUN_2050</name>
</gene>
<feature type="chain" id="PRO_1000005083" description="Large ribosomal subunit protein bL32">
    <location>
        <begin position="1"/>
        <end position="53"/>
    </location>
</feature>
<feature type="region of interest" description="Disordered" evidence="2">
    <location>
        <begin position="1"/>
        <end position="53"/>
    </location>
</feature>
<feature type="compositionally biased region" description="Basic residues" evidence="2">
    <location>
        <begin position="1"/>
        <end position="20"/>
    </location>
</feature>
<feature type="compositionally biased region" description="Polar residues" evidence="2">
    <location>
        <begin position="42"/>
        <end position="53"/>
    </location>
</feature>
<keyword id="KW-0687">Ribonucleoprotein</keyword>
<keyword id="KW-0689">Ribosomal protein</keyword>
<organism>
    <name type="scientific">Sulfurovum sp. (strain NBC37-1)</name>
    <dbReference type="NCBI Taxonomy" id="387093"/>
    <lineage>
        <taxon>Bacteria</taxon>
        <taxon>Pseudomonadati</taxon>
        <taxon>Campylobacterota</taxon>
        <taxon>Epsilonproteobacteria</taxon>
        <taxon>Campylobacterales</taxon>
        <taxon>Sulfurovaceae</taxon>
        <taxon>Sulfurovum</taxon>
    </lineage>
</organism>
<name>RL32_SULNB</name>
<evidence type="ECO:0000255" key="1">
    <source>
        <dbReference type="HAMAP-Rule" id="MF_00340"/>
    </source>
</evidence>
<evidence type="ECO:0000256" key="2">
    <source>
        <dbReference type="SAM" id="MobiDB-lite"/>
    </source>
</evidence>
<evidence type="ECO:0000305" key="3"/>
<comment type="similarity">
    <text evidence="1">Belongs to the bacterial ribosomal protein bL32 family.</text>
</comment>
<protein>
    <recommendedName>
        <fullName evidence="1">Large ribosomal subunit protein bL32</fullName>
    </recommendedName>
    <alternativeName>
        <fullName evidence="3">50S ribosomal protein L32</fullName>
    </alternativeName>
</protein>
<dbReference type="EMBL" id="AP009179">
    <property type="protein sequence ID" value="BAF72991.1"/>
    <property type="molecule type" value="Genomic_DNA"/>
</dbReference>
<dbReference type="RefSeq" id="WP_012083812.1">
    <property type="nucleotide sequence ID" value="NC_009663.1"/>
</dbReference>
<dbReference type="SMR" id="A6QBY2"/>
<dbReference type="STRING" id="387093.SUN_2050"/>
<dbReference type="KEGG" id="sun:SUN_2050"/>
<dbReference type="eggNOG" id="COG0333">
    <property type="taxonomic scope" value="Bacteria"/>
</dbReference>
<dbReference type="HOGENOM" id="CLU_129084_1_2_7"/>
<dbReference type="OrthoDB" id="9801927at2"/>
<dbReference type="Proteomes" id="UP000006378">
    <property type="component" value="Chromosome"/>
</dbReference>
<dbReference type="GO" id="GO:0015934">
    <property type="term" value="C:large ribosomal subunit"/>
    <property type="evidence" value="ECO:0007669"/>
    <property type="project" value="InterPro"/>
</dbReference>
<dbReference type="GO" id="GO:0003735">
    <property type="term" value="F:structural constituent of ribosome"/>
    <property type="evidence" value="ECO:0007669"/>
    <property type="project" value="InterPro"/>
</dbReference>
<dbReference type="GO" id="GO:0006412">
    <property type="term" value="P:translation"/>
    <property type="evidence" value="ECO:0007669"/>
    <property type="project" value="UniProtKB-UniRule"/>
</dbReference>
<dbReference type="HAMAP" id="MF_00340">
    <property type="entry name" value="Ribosomal_bL32"/>
    <property type="match status" value="1"/>
</dbReference>
<dbReference type="InterPro" id="IPR002677">
    <property type="entry name" value="Ribosomal_bL32"/>
</dbReference>
<dbReference type="InterPro" id="IPR044957">
    <property type="entry name" value="Ribosomal_bL32_bact"/>
</dbReference>
<dbReference type="InterPro" id="IPR011332">
    <property type="entry name" value="Ribosomal_zn-bd"/>
</dbReference>
<dbReference type="NCBIfam" id="TIGR01031">
    <property type="entry name" value="rpmF_bact"/>
    <property type="match status" value="1"/>
</dbReference>
<dbReference type="PANTHER" id="PTHR35534">
    <property type="entry name" value="50S RIBOSOMAL PROTEIN L32"/>
    <property type="match status" value="1"/>
</dbReference>
<dbReference type="PANTHER" id="PTHR35534:SF1">
    <property type="entry name" value="LARGE RIBOSOMAL SUBUNIT PROTEIN BL32"/>
    <property type="match status" value="1"/>
</dbReference>
<dbReference type="Pfam" id="PF01783">
    <property type="entry name" value="Ribosomal_L32p"/>
    <property type="match status" value="1"/>
</dbReference>
<dbReference type="SUPFAM" id="SSF57829">
    <property type="entry name" value="Zn-binding ribosomal proteins"/>
    <property type="match status" value="1"/>
</dbReference>
<sequence length="53" mass="6192">MAVPKRRVSHTRAAKRRTHYKLTLPMPVKDADGTWRMPHHMNMTTGEYKTTKA</sequence>
<proteinExistence type="inferred from homology"/>
<accession>A6QBY2</accession>
<reference key="1">
    <citation type="journal article" date="2007" name="Proc. Natl. Acad. Sci. U.S.A.">
        <title>Deep-sea vent epsilon-proteobacterial genomes provide insights into emergence of pathogens.</title>
        <authorList>
            <person name="Nakagawa S."/>
            <person name="Takaki Y."/>
            <person name="Shimamura S."/>
            <person name="Reysenbach A.-L."/>
            <person name="Takai K."/>
            <person name="Horikoshi K."/>
        </authorList>
    </citation>
    <scope>NUCLEOTIDE SEQUENCE [LARGE SCALE GENOMIC DNA]</scope>
    <source>
        <strain>NBC37-1</strain>
    </source>
</reference>